<name>RIP2_ORYSJ</name>
<reference key="1">
    <citation type="journal article" date="2005" name="Nature">
        <title>The map-based sequence of the rice genome.</title>
        <authorList>
            <consortium name="International rice genome sequencing project (IRGSP)"/>
        </authorList>
    </citation>
    <scope>NUCLEOTIDE SEQUENCE [LARGE SCALE GENOMIC DNA]</scope>
    <source>
        <strain>cv. Nipponbare</strain>
    </source>
</reference>
<reference key="2">
    <citation type="journal article" date="2013" name="Rice">
        <title>Improvement of the Oryza sativa Nipponbare reference genome using next generation sequence and optical map data.</title>
        <authorList>
            <person name="Kawahara Y."/>
            <person name="de la Bastide M."/>
            <person name="Hamilton J.P."/>
            <person name="Kanamori H."/>
            <person name="McCombie W.R."/>
            <person name="Ouyang S."/>
            <person name="Schwartz D.C."/>
            <person name="Tanaka T."/>
            <person name="Wu J."/>
            <person name="Zhou S."/>
            <person name="Childs K.L."/>
            <person name="Davidson R.M."/>
            <person name="Lin H."/>
            <person name="Quesada-Ocampo L."/>
            <person name="Vaillancourt B."/>
            <person name="Sakai H."/>
            <person name="Lee S.S."/>
            <person name="Kim J."/>
            <person name="Numa H."/>
            <person name="Itoh T."/>
            <person name="Buell C.R."/>
            <person name="Matsumoto T."/>
        </authorList>
    </citation>
    <scope>GENOME REANNOTATION</scope>
    <source>
        <strain>cv. Nipponbare</strain>
    </source>
</reference>
<comment type="subcellular location">
    <subcellularLocation>
        <location evidence="2">Secreted</location>
    </subcellularLocation>
</comment>
<comment type="similarity">
    <text evidence="2">Belongs to the kiwellin family.</text>
</comment>
<protein>
    <recommendedName>
        <fullName>Putative ripening-related protein 2</fullName>
    </recommendedName>
</protein>
<keyword id="KW-1185">Reference proteome</keyword>
<keyword id="KW-0964">Secreted</keyword>
<keyword id="KW-0732">Signal</keyword>
<organism>
    <name type="scientific">Oryza sativa subsp. japonica</name>
    <name type="common">Rice</name>
    <dbReference type="NCBI Taxonomy" id="39947"/>
    <lineage>
        <taxon>Eukaryota</taxon>
        <taxon>Viridiplantae</taxon>
        <taxon>Streptophyta</taxon>
        <taxon>Embryophyta</taxon>
        <taxon>Tracheophyta</taxon>
        <taxon>Spermatophyta</taxon>
        <taxon>Magnoliopsida</taxon>
        <taxon>Liliopsida</taxon>
        <taxon>Poales</taxon>
        <taxon>Poaceae</taxon>
        <taxon>BOP clade</taxon>
        <taxon>Oryzoideae</taxon>
        <taxon>Oryzeae</taxon>
        <taxon>Oryzinae</taxon>
        <taxon>Oryza</taxon>
        <taxon>Oryza sativa</taxon>
    </lineage>
</organism>
<gene>
    <name type="ordered locus">Os02g0637000</name>
    <name type="ordered locus">LOC_Os02g42450</name>
    <name type="ORF">OJ1581_H09.18</name>
    <name type="ORF">OSJNBa0014E22.12</name>
</gene>
<accession>Q6H5X0</accession>
<evidence type="ECO:0000255" key="1"/>
<evidence type="ECO:0000305" key="2"/>
<feature type="signal peptide" evidence="1">
    <location>
        <begin position="1"/>
        <end position="26"/>
    </location>
</feature>
<feature type="chain" id="PRO_0000045969" description="Putative ripening-related protein 2">
    <location>
        <begin position="27"/>
        <end position="192"/>
    </location>
</feature>
<proteinExistence type="inferred from homology"/>
<dbReference type="EMBL" id="AP004067">
    <property type="protein sequence ID" value="BAD25081.1"/>
    <property type="molecule type" value="Genomic_DNA"/>
</dbReference>
<dbReference type="EMBL" id="AP005513">
    <property type="protein sequence ID" value="BAD25879.1"/>
    <property type="molecule type" value="Genomic_DNA"/>
</dbReference>
<dbReference type="EMBL" id="AP014958">
    <property type="status" value="NOT_ANNOTATED_CDS"/>
    <property type="molecule type" value="Genomic_DNA"/>
</dbReference>
<dbReference type="RefSeq" id="XP_015622966.1">
    <property type="nucleotide sequence ID" value="XM_015767480.1"/>
</dbReference>
<dbReference type="SMR" id="Q6H5X0"/>
<dbReference type="FunCoup" id="Q6H5X0">
    <property type="interactions" value="1"/>
</dbReference>
<dbReference type="PaxDb" id="39947-Q6H5X0"/>
<dbReference type="eggNOG" id="ENOG502RXVH">
    <property type="taxonomic scope" value="Eukaryota"/>
</dbReference>
<dbReference type="HOGENOM" id="CLU_047639_4_2_1"/>
<dbReference type="InParanoid" id="Q6H5X0"/>
<dbReference type="OrthoDB" id="406505at2759"/>
<dbReference type="Proteomes" id="UP000000763">
    <property type="component" value="Chromosome 2"/>
</dbReference>
<dbReference type="Proteomes" id="UP000059680">
    <property type="component" value="Chromosome 2"/>
</dbReference>
<dbReference type="GO" id="GO:0005576">
    <property type="term" value="C:extracellular region"/>
    <property type="evidence" value="ECO:0007669"/>
    <property type="project" value="UniProtKB-SubCell"/>
</dbReference>
<dbReference type="CDD" id="cd22270">
    <property type="entry name" value="DPBB_kiwellin-like"/>
    <property type="match status" value="1"/>
</dbReference>
<dbReference type="Gene3D" id="2.40.40.10">
    <property type="entry name" value="RlpA-like domain"/>
    <property type="match status" value="1"/>
</dbReference>
<dbReference type="InterPro" id="IPR039271">
    <property type="entry name" value="Kiwellin-like"/>
</dbReference>
<dbReference type="InterPro" id="IPR036908">
    <property type="entry name" value="RlpA-like_sf"/>
</dbReference>
<dbReference type="PANTHER" id="PTHR33191">
    <property type="entry name" value="RIPENING-RELATED PROTEIN 2-RELATED"/>
    <property type="match status" value="1"/>
</dbReference>
<dbReference type="PANTHER" id="PTHR33191:SF9">
    <property type="entry name" value="RIPENING-RELATED PROTEIN 2-RELATED"/>
    <property type="match status" value="1"/>
</dbReference>
<dbReference type="Pfam" id="PF24300">
    <property type="entry name" value="KWL1"/>
    <property type="match status" value="1"/>
</dbReference>
<dbReference type="SUPFAM" id="SSF50685">
    <property type="entry name" value="Barwin-like endoglucanases"/>
    <property type="match status" value="1"/>
</dbReference>
<sequence>MATTNCLLALAIAGLVLVSLPGLSRGDVDARRGRELAGGCNPSGTLRPSRSHSCQDCCKAGRSYPTYACSPATTGSTKAVMTLNDFEAGGDGGDPSECDGKFHKNTERVVALSTGWYANGRRCNKNIRINANGRSVLAKVVDECDSLHGCDKEHAYQPPCRPNVVDASQAVWDALRITGEDVGEYDITWSDA</sequence>